<accession>P02975</accession>
<sequence length="158" mass="16863">MKSLQKGFTLIELMIVVAIIGILAAFAIPAYNDYIARSQAAEGLTLADGLKVRISDHLESGECKGDANPASGSLGNDDKGKYALATIDGDYNKDAKTADEKNGCKVVITYGQGTAGEKISKLIVGKKLVLDQFVNGSYKYNEGETDLELKFIPNAVKN</sequence>
<keyword id="KW-0002">3D-structure</keyword>
<keyword id="KW-0903">Direct protein sequencing</keyword>
<keyword id="KW-1015">Disulfide bond</keyword>
<keyword id="KW-0281">Fimbrium</keyword>
<keyword id="KW-0472">Membrane</keyword>
<keyword id="KW-0488">Methylation</keyword>
<keyword id="KW-0812">Transmembrane</keyword>
<keyword id="KW-1133">Transmembrane helix</keyword>
<gene>
    <name type="primary">fimA</name>
</gene>
<evidence type="ECO:0000250" key="1">
    <source>
        <dbReference type="UniProtKB" id="A5EWR9"/>
    </source>
</evidence>
<evidence type="ECO:0000255" key="2"/>
<evidence type="ECO:0000255" key="3">
    <source>
        <dbReference type="PROSITE-ProRule" id="PRU01070"/>
    </source>
</evidence>
<evidence type="ECO:0000269" key="4">
    <source>
    </source>
</evidence>
<evidence type="ECO:0000269" key="5">
    <source>
    </source>
</evidence>
<evidence type="ECO:0000305" key="6"/>
<evidence type="ECO:0007829" key="7">
    <source>
        <dbReference type="PDB" id="3SOK"/>
    </source>
</evidence>
<dbReference type="EMBL" id="K02662">
    <property type="protein sequence ID" value="AAA23345.1"/>
    <property type="molecule type" value="Genomic_DNA"/>
</dbReference>
<dbReference type="EMBL" id="X52403">
    <property type="protein sequence ID" value="CAA36648.1"/>
    <property type="molecule type" value="Genomic_DNA"/>
</dbReference>
<dbReference type="EMBL" id="A00622">
    <property type="protein sequence ID" value="CAA00071.1"/>
    <property type="molecule type" value="Unassigned_DNA"/>
</dbReference>
<dbReference type="PIR" id="A03499">
    <property type="entry name" value="YQBZN"/>
</dbReference>
<dbReference type="PDB" id="3SOK">
    <property type="method" value="X-ray"/>
    <property type="resolution" value="2.30 A"/>
    <property type="chains" value="A/B=8-158"/>
</dbReference>
<dbReference type="PDBsum" id="3SOK"/>
<dbReference type="SMR" id="P02975"/>
<dbReference type="iPTMnet" id="P02975"/>
<dbReference type="EvolutionaryTrace" id="P02975"/>
<dbReference type="GO" id="GO:0016020">
    <property type="term" value="C:membrane"/>
    <property type="evidence" value="ECO:0007669"/>
    <property type="project" value="UniProtKB-SubCell"/>
</dbReference>
<dbReference type="GO" id="GO:0009289">
    <property type="term" value="C:pilus"/>
    <property type="evidence" value="ECO:0007669"/>
    <property type="project" value="UniProtKB-SubCell"/>
</dbReference>
<dbReference type="GO" id="GO:0007155">
    <property type="term" value="P:cell adhesion"/>
    <property type="evidence" value="ECO:0007669"/>
    <property type="project" value="InterPro"/>
</dbReference>
<dbReference type="Gene3D" id="3.30.700.10">
    <property type="entry name" value="Glycoprotein, Type 4 Pilin"/>
    <property type="match status" value="1"/>
</dbReference>
<dbReference type="InterPro" id="IPR012902">
    <property type="entry name" value="N_methyl_site"/>
</dbReference>
<dbReference type="InterPro" id="IPR001082">
    <property type="entry name" value="Pilin"/>
</dbReference>
<dbReference type="InterPro" id="IPR045584">
    <property type="entry name" value="Pilin-like"/>
</dbReference>
<dbReference type="InterPro" id="IPR050470">
    <property type="entry name" value="T4P/T2SS_Core"/>
</dbReference>
<dbReference type="NCBIfam" id="TIGR02532">
    <property type="entry name" value="IV_pilin_GFxxxE"/>
    <property type="match status" value="1"/>
</dbReference>
<dbReference type="PANTHER" id="PTHR30093">
    <property type="entry name" value="GENERAL SECRETION PATHWAY PROTEIN G"/>
    <property type="match status" value="1"/>
</dbReference>
<dbReference type="PANTHER" id="PTHR30093:SF34">
    <property type="entry name" value="PREPILIN PEPTIDASE-DEPENDENT PROTEIN D"/>
    <property type="match status" value="1"/>
</dbReference>
<dbReference type="Pfam" id="PF07963">
    <property type="entry name" value="N_methyl"/>
    <property type="match status" value="1"/>
</dbReference>
<dbReference type="Pfam" id="PF00114">
    <property type="entry name" value="Pilin"/>
    <property type="match status" value="1"/>
</dbReference>
<dbReference type="SUPFAM" id="SSF54523">
    <property type="entry name" value="Pili subunits"/>
    <property type="match status" value="1"/>
</dbReference>
<dbReference type="PROSITE" id="PS00409">
    <property type="entry name" value="PROKAR_NTER_METHYL"/>
    <property type="match status" value="1"/>
</dbReference>
<protein>
    <recommendedName>
        <fullName>Type IV major fimbrial protein FimA</fullName>
    </recommendedName>
    <alternativeName>
        <fullName>198 antigen</fullName>
    </alternativeName>
    <alternativeName>
        <fullName>Pilin</fullName>
    </alternativeName>
    <alternativeName>
        <fullName>Serogroup A1</fullName>
    </alternativeName>
</protein>
<proteinExistence type="evidence at protein level"/>
<feature type="propeptide" id="PRO_0000024111" description="Leader sequence" evidence="3 5">
    <location>
        <begin position="1"/>
        <end position="7"/>
    </location>
</feature>
<feature type="chain" id="PRO_0000024112" description="Type IV major fimbrial protein FimA">
    <location>
        <begin position="8"/>
        <end position="158"/>
    </location>
</feature>
<feature type="transmembrane region" description="Helical" evidence="2">
    <location>
        <begin position="8"/>
        <end position="28"/>
    </location>
</feature>
<feature type="modified residue" description="N-methylphenylalanine" evidence="3 5">
    <location>
        <position position="8"/>
    </location>
</feature>
<feature type="disulfide bond" evidence="4">
    <location>
        <begin position="63"/>
        <end position="104"/>
    </location>
</feature>
<feature type="sequence conflict" description="In Ref. 3; AA sequence." evidence="6" ref="3">
    <original>G</original>
    <variation>K</variation>
    <location>
        <position position="80"/>
    </location>
</feature>
<feature type="sequence conflict" description="In Ref. 3; AA sequence." evidence="6" ref="3">
    <original>N</original>
    <variation>D</variation>
    <location>
        <position position="102"/>
    </location>
</feature>
<feature type="sequence conflict" description="In Ref. 3; AA sequence." evidence="6" ref="3">
    <original>N</original>
    <variation>D</variation>
    <location>
        <position position="135"/>
    </location>
</feature>
<feature type="helix" evidence="7">
    <location>
        <begin position="10"/>
        <end position="49"/>
    </location>
</feature>
<feature type="helix" evidence="7">
    <location>
        <begin position="51"/>
        <end position="58"/>
    </location>
</feature>
<feature type="turn" evidence="7">
    <location>
        <begin position="59"/>
        <end position="61"/>
    </location>
</feature>
<feature type="turn" evidence="7">
    <location>
        <begin position="69"/>
        <end position="71"/>
    </location>
</feature>
<feature type="strand" evidence="7">
    <location>
        <begin position="76"/>
        <end position="79"/>
    </location>
</feature>
<feature type="strand" evidence="7">
    <location>
        <begin position="81"/>
        <end position="89"/>
    </location>
</feature>
<feature type="strand" evidence="7">
    <location>
        <begin position="100"/>
        <end position="110"/>
    </location>
</feature>
<feature type="turn" evidence="7">
    <location>
        <begin position="114"/>
        <end position="117"/>
    </location>
</feature>
<feature type="turn" evidence="7">
    <location>
        <begin position="121"/>
        <end position="125"/>
    </location>
</feature>
<feature type="strand" evidence="7">
    <location>
        <begin position="127"/>
        <end position="133"/>
    </location>
</feature>
<feature type="strand" evidence="7">
    <location>
        <begin position="138"/>
        <end position="140"/>
    </location>
</feature>
<feature type="helix" evidence="7">
    <location>
        <begin position="149"/>
        <end position="151"/>
    </location>
</feature>
<feature type="helix" evidence="7">
    <location>
        <begin position="154"/>
        <end position="156"/>
    </location>
</feature>
<organism>
    <name type="scientific">Dichelobacter nodosus</name>
    <name type="common">Bacteroides nodosus</name>
    <dbReference type="NCBI Taxonomy" id="870"/>
    <lineage>
        <taxon>Bacteria</taxon>
        <taxon>Pseudomonadati</taxon>
        <taxon>Pseudomonadota</taxon>
        <taxon>Gammaproteobacteria</taxon>
        <taxon>Cardiobacteriales</taxon>
        <taxon>Cardiobacteriaceae</taxon>
        <taxon>Dichelobacter</taxon>
    </lineage>
</organism>
<name>FMAA_DICNO</name>
<reference key="1">
    <citation type="journal article" date="1984" name="J. Bacteriol.">
        <title>Nucleotide sequence of the gene encoding pilin of Bacteroides nodosus, the causal organism of ovine footrot.</title>
        <authorList>
            <person name="Elleman T.C."/>
            <person name="Hoyne P.A."/>
        </authorList>
    </citation>
    <scope>NUCLEOTIDE SEQUENCE [GENOMIC DNA]</scope>
    <source>
        <strain>Serogroup A1 isolate 198</strain>
    </source>
</reference>
<reference key="2">
    <citation type="journal article" date="1991" name="Mol. Microbiol.">
        <title>Gene sequences and comparison of the fimbrial subunits representative of Bacteroides nodosus serotypes A to I: class I and class II strains.</title>
        <authorList>
            <person name="Mattick J.S."/>
            <person name="Anderson B.J."/>
            <person name="Cox P.T."/>
            <person name="Dalrymple B.P."/>
            <person name="Bills M.M."/>
            <person name="Hobbs M."/>
            <person name="Egerton J.R."/>
        </authorList>
    </citation>
    <scope>NUCLEOTIDE SEQUENCE [GENOMIC DNA]</scope>
    <source>
        <strain>Serogroup A1 isolate VCS1001</strain>
    </source>
</reference>
<reference key="3">
    <citation type="journal article" date="1983" name="FEBS Lett.">
        <title>Amino acid sequence of pilin from Bacteroides nodosus (strain 198), the causative organism of ovine footrot.</title>
        <authorList>
            <person name="McKern N.M."/>
            <person name="O'Donnell I.J."/>
            <person name="Inglis A.S."/>
            <person name="Stewart D.J."/>
            <person name="Clark B.L."/>
        </authorList>
    </citation>
    <scope>PROTEIN SEQUENCE OF 8-158</scope>
    <scope>METHYLATION AT PHE-8</scope>
    <source>
        <strain>Serogroup A1 isolate 198</strain>
    </source>
</reference>
<reference key="4">
    <citation type="journal article" date="2008" name="Vet. Microbiol.">
        <title>Glycosylation of type-IV fimbriae of Dichelobacter nodosus.</title>
        <authorList>
            <person name="Cagatay T.I."/>
            <person name="Hickford J.G."/>
        </authorList>
    </citation>
    <scope>GLYCOSYLATION</scope>
</reference>
<reference key="5">
    <citation type="journal article" date="2011" name="J. Biol. Chem.">
        <title>Ultrahigh resolution and full-length pilin structures with insights for filament assembly, pathogenic functions, and vaccine potential.</title>
        <authorList>
            <person name="Hartung S."/>
            <person name="Arvai A.S."/>
            <person name="Wood T."/>
            <person name="Kolappan S."/>
            <person name="Shin D.S."/>
            <person name="Craig L."/>
            <person name="Tainer J.A."/>
        </authorList>
    </citation>
    <scope>X-RAY CRYSTALLOGRAPHY (2.30 ANGSTROMS)</scope>
    <scope>DISULFIDE BOND</scope>
</reference>
<comment type="function">
    <text evidence="1">Major component of the type IV fimbriae that plays an essential role in twitching motility, natural transformation, and protease secretion.</text>
</comment>
<comment type="subunit">
    <text>The pili are polar flexible filaments of about 5.4 nanometers diameter and 2.5 micrometers average length; they consist of only a single polypeptide chain arranged in a helical configuration of five subunits per turn in the assembled pilus.</text>
</comment>
<comment type="subcellular location">
    <subcellularLocation>
        <location evidence="1">Fimbrium</location>
    </subcellularLocation>
    <subcellularLocation>
        <location evidence="2">Membrane</location>
        <topology evidence="2">Single-pass membrane protein</topology>
    </subcellularLocation>
</comment>
<comment type="similarity">
    <text evidence="6">Belongs to the N-Me-Phe pilin family.</text>
</comment>
<comment type="caution">
    <text evidence="6">In PubMed:6653780 it is said that 50% of the peptides have N-methyl-Phe and 50% begin with Thr-9. N-terminal methylation produces preview during Edman degradation, which makes this appear to happen when the peptide is completely N-terminally methylated.</text>
</comment>